<dbReference type="EC" id="2.7.2.11"/>
<dbReference type="EC" id="1.2.1.41"/>
<dbReference type="EMBL" id="U60267">
    <property type="protein sequence ID" value="AAB67875.1"/>
    <property type="molecule type" value="mRNA"/>
</dbReference>
<dbReference type="PIR" id="T07422">
    <property type="entry name" value="T07422"/>
</dbReference>
<dbReference type="RefSeq" id="NP_001233907.1">
    <property type="nucleotide sequence ID" value="NM_001246978.2"/>
</dbReference>
<dbReference type="SMR" id="Q96480"/>
<dbReference type="FunCoup" id="Q96480">
    <property type="interactions" value="1862"/>
</dbReference>
<dbReference type="STRING" id="4081.Q96480"/>
<dbReference type="PaxDb" id="4081-Solyc08g043170.2.1"/>
<dbReference type="GeneID" id="544281"/>
<dbReference type="KEGG" id="sly:544281"/>
<dbReference type="eggNOG" id="KOG1154">
    <property type="taxonomic scope" value="Eukaryota"/>
</dbReference>
<dbReference type="eggNOG" id="KOG4165">
    <property type="taxonomic scope" value="Eukaryota"/>
</dbReference>
<dbReference type="InParanoid" id="Q96480"/>
<dbReference type="OrthoDB" id="1934954at2759"/>
<dbReference type="UniPathway" id="UPA00098">
    <property type="reaction ID" value="UER00359"/>
</dbReference>
<dbReference type="UniPathway" id="UPA00098">
    <property type="reaction ID" value="UER00360"/>
</dbReference>
<dbReference type="Proteomes" id="UP000004994">
    <property type="component" value="Unplaced"/>
</dbReference>
<dbReference type="ExpressionAtlas" id="Q96480">
    <property type="expression patterns" value="baseline and differential"/>
</dbReference>
<dbReference type="GO" id="GO:0005737">
    <property type="term" value="C:cytoplasm"/>
    <property type="evidence" value="ECO:0007669"/>
    <property type="project" value="InterPro"/>
</dbReference>
<dbReference type="GO" id="GO:0005524">
    <property type="term" value="F:ATP binding"/>
    <property type="evidence" value="ECO:0007669"/>
    <property type="project" value="UniProtKB-KW"/>
</dbReference>
<dbReference type="GO" id="GO:0004349">
    <property type="term" value="F:glutamate 5-kinase activity"/>
    <property type="evidence" value="ECO:0007669"/>
    <property type="project" value="UniProtKB-EC"/>
</dbReference>
<dbReference type="GO" id="GO:0004350">
    <property type="term" value="F:glutamate-5-semialdehyde dehydrogenase activity"/>
    <property type="evidence" value="ECO:0000318"/>
    <property type="project" value="GO_Central"/>
</dbReference>
<dbReference type="GO" id="GO:0055129">
    <property type="term" value="P:L-proline biosynthetic process"/>
    <property type="evidence" value="ECO:0007669"/>
    <property type="project" value="UniProtKB-UniPathway"/>
</dbReference>
<dbReference type="CDD" id="cd04256">
    <property type="entry name" value="AAK_P5CS_ProBA"/>
    <property type="match status" value="1"/>
</dbReference>
<dbReference type="CDD" id="cd07079">
    <property type="entry name" value="ALDH_F18-19_ProA-GPR"/>
    <property type="match status" value="1"/>
</dbReference>
<dbReference type="FunFam" id="3.40.1160.10:FF:000013">
    <property type="entry name" value="Delta-1-pyrroline-5-carboxylate synthase"/>
    <property type="match status" value="1"/>
</dbReference>
<dbReference type="FunFam" id="3.40.309.10:FF:000015">
    <property type="entry name" value="Delta-1-pyrroline-5-carboxylate synthase"/>
    <property type="match status" value="1"/>
</dbReference>
<dbReference type="Gene3D" id="3.40.1160.10">
    <property type="entry name" value="Acetylglutamate kinase-like"/>
    <property type="match status" value="1"/>
</dbReference>
<dbReference type="Gene3D" id="3.40.605.10">
    <property type="entry name" value="Aldehyde Dehydrogenase, Chain A, domain 1"/>
    <property type="match status" value="1"/>
</dbReference>
<dbReference type="Gene3D" id="3.40.309.10">
    <property type="entry name" value="Aldehyde Dehydrogenase, Chain A, domain 2"/>
    <property type="match status" value="1"/>
</dbReference>
<dbReference type="HAMAP" id="MF_00412">
    <property type="entry name" value="ProA"/>
    <property type="match status" value="1"/>
</dbReference>
<dbReference type="HAMAP" id="MF_00456">
    <property type="entry name" value="ProB"/>
    <property type="match status" value="1"/>
</dbReference>
<dbReference type="InterPro" id="IPR036393">
    <property type="entry name" value="AceGlu_kinase-like_sf"/>
</dbReference>
<dbReference type="InterPro" id="IPR016161">
    <property type="entry name" value="Ald_DH/histidinol_DH"/>
</dbReference>
<dbReference type="InterPro" id="IPR016163">
    <property type="entry name" value="Ald_DH_C"/>
</dbReference>
<dbReference type="InterPro" id="IPR016162">
    <property type="entry name" value="Ald_DH_N"/>
</dbReference>
<dbReference type="InterPro" id="IPR015590">
    <property type="entry name" value="Aldehyde_DH_dom"/>
</dbReference>
<dbReference type="InterPro" id="IPR001048">
    <property type="entry name" value="Asp/Glu/Uridylate_kinase"/>
</dbReference>
<dbReference type="InterPro" id="IPR020593">
    <property type="entry name" value="G-glutamylP_reductase_CS"/>
</dbReference>
<dbReference type="InterPro" id="IPR041744">
    <property type="entry name" value="G5K_ProBA"/>
</dbReference>
<dbReference type="InterPro" id="IPR001057">
    <property type="entry name" value="Glu/AcGlu_kinase"/>
</dbReference>
<dbReference type="InterPro" id="IPR005715">
    <property type="entry name" value="Glu_5kinase/COase_Synthase"/>
</dbReference>
<dbReference type="InterPro" id="IPR019797">
    <property type="entry name" value="Glutamate_5-kinase_CS"/>
</dbReference>
<dbReference type="InterPro" id="IPR000965">
    <property type="entry name" value="GPR_dom"/>
</dbReference>
<dbReference type="InterPro" id="IPR005766">
    <property type="entry name" value="P5_carboxy_syn"/>
</dbReference>
<dbReference type="NCBIfam" id="TIGR01092">
    <property type="entry name" value="P5CS"/>
    <property type="match status" value="1"/>
</dbReference>
<dbReference type="NCBIfam" id="NF001221">
    <property type="entry name" value="PRK00197.1"/>
    <property type="match status" value="1"/>
</dbReference>
<dbReference type="NCBIfam" id="TIGR00407">
    <property type="entry name" value="proA"/>
    <property type="match status" value="1"/>
</dbReference>
<dbReference type="NCBIfam" id="TIGR01027">
    <property type="entry name" value="proB"/>
    <property type="match status" value="1"/>
</dbReference>
<dbReference type="PANTHER" id="PTHR11063:SF26">
    <property type="entry name" value="DELTA-1-PYRROLINE-5-CARBOXYLATE SYNTHASE"/>
    <property type="match status" value="1"/>
</dbReference>
<dbReference type="PANTHER" id="PTHR11063">
    <property type="entry name" value="GLUTAMATE SEMIALDEHYDE DEHYDROGENASE"/>
    <property type="match status" value="1"/>
</dbReference>
<dbReference type="Pfam" id="PF00696">
    <property type="entry name" value="AA_kinase"/>
    <property type="match status" value="1"/>
</dbReference>
<dbReference type="Pfam" id="PF00171">
    <property type="entry name" value="Aldedh"/>
    <property type="match status" value="1"/>
</dbReference>
<dbReference type="PIRSF" id="PIRSF036429">
    <property type="entry name" value="P5C_syn"/>
    <property type="match status" value="1"/>
</dbReference>
<dbReference type="PRINTS" id="PR00474">
    <property type="entry name" value="GLU5KINASE"/>
</dbReference>
<dbReference type="SUPFAM" id="SSF53720">
    <property type="entry name" value="ALDH-like"/>
    <property type="match status" value="1"/>
</dbReference>
<dbReference type="SUPFAM" id="SSF53633">
    <property type="entry name" value="Carbamate kinase-like"/>
    <property type="match status" value="1"/>
</dbReference>
<dbReference type="PROSITE" id="PS00902">
    <property type="entry name" value="GLUTAMATE_5_KINASE"/>
    <property type="match status" value="1"/>
</dbReference>
<dbReference type="PROSITE" id="PS01223">
    <property type="entry name" value="PROA"/>
    <property type="match status" value="1"/>
</dbReference>
<evidence type="ECO:0000250" key="1"/>
<evidence type="ECO:0000305" key="2"/>
<comment type="function">
    <text>P5CS plays a key role in proline biosynthesis, leading to osmoregulation in plants.</text>
</comment>
<comment type="catalytic activity">
    <reaction>
        <text>L-glutamate + ATP = L-glutamyl 5-phosphate + ADP</text>
        <dbReference type="Rhea" id="RHEA:14877"/>
        <dbReference type="ChEBI" id="CHEBI:29985"/>
        <dbReference type="ChEBI" id="CHEBI:30616"/>
        <dbReference type="ChEBI" id="CHEBI:58274"/>
        <dbReference type="ChEBI" id="CHEBI:456216"/>
        <dbReference type="EC" id="2.7.2.11"/>
    </reaction>
</comment>
<comment type="catalytic activity">
    <reaction>
        <text>L-glutamate 5-semialdehyde + phosphate + NADP(+) = L-glutamyl 5-phosphate + NADPH + H(+)</text>
        <dbReference type="Rhea" id="RHEA:19541"/>
        <dbReference type="ChEBI" id="CHEBI:15378"/>
        <dbReference type="ChEBI" id="CHEBI:43474"/>
        <dbReference type="ChEBI" id="CHEBI:57783"/>
        <dbReference type="ChEBI" id="CHEBI:58066"/>
        <dbReference type="ChEBI" id="CHEBI:58274"/>
        <dbReference type="ChEBI" id="CHEBI:58349"/>
        <dbReference type="EC" id="1.2.1.41"/>
    </reaction>
</comment>
<comment type="activity regulation">
    <text>Feedback regulated by proline.</text>
</comment>
<comment type="pathway">
    <text>Amino-acid biosynthesis; L-proline biosynthesis; L-glutamate 5-semialdehyde from L-glutamate: step 1/2.</text>
</comment>
<comment type="pathway">
    <text>Amino-acid biosynthesis; L-proline biosynthesis; L-glutamate 5-semialdehyde from L-glutamate: step 2/2.</text>
</comment>
<comment type="tissue specificity">
    <text>Expressed at high levels in leaves and is inducible in roots subjected to salt stress.</text>
</comment>
<comment type="similarity">
    <text evidence="2">In the N-terminal section; belongs to the glutamate 5-kinase family.</text>
</comment>
<comment type="similarity">
    <text evidence="2">In the C-terminal section; belongs to the gamma-glutamyl phosphate reductase family.</text>
</comment>
<name>P5CS_SOLLC</name>
<proteinExistence type="evidence at transcript level"/>
<gene>
    <name type="primary">PRO2</name>
</gene>
<sequence length="717" mass="77590">METVDSTRAFVKNVKRLIVKVGTAVVTRADGRLALGRLGALCEQLQELNSQGYEVILVTSGAVGVGRQRLRYRKLLNSSFLDLQKPQTELDGKACAAVGQNGLMALYDSLFSQLDVTSAQLLVTDNDFRDPDFRRQLNDTVNSLLSLKVIPIFNENDAISTRRAPYEDSSGIFWDNDSLAALLALELKADLLVLLSDVDGLYSGPPRDPDSKLIYTYIKEIHERVITFGDKSRVGRGGMTAKVKAAMYAAYAGIPVVITSGFATDNIIKVLHGERIGTLFHCDANKWASIGETDAREMAVAARACSRRLQALSSQERSKILQDIADALEANEKAILAENEADVVAAQQAGYEKSLISRLALNPGKISSLANSVRVLSNMDEPLGHTLKRTEIADGFILEKSSSPLGVVLIIFESRPDALVQIASLAVRSGNGLMLKGGKEAKRSNAILHKVITSAIPVSVGERLIGLVTSREEIPELLKLDDVIDLVIPRGSNKLVSQIKASTKIPVLGHADGICHVYVDKSADMDMAKRITVDAKIDYPAACNAMETLLVHKDLAQNGGLNDLIVELQTKGVSLYGGPKASSLLMIPEARTFRHEYSSLACTVEVVEDVYAAIDHIHQHGSAHTDSIITEDQEVAEVFLRQVDSAAVFHNASTRFSDGFRFGLGAEVGISTGRIHARGPVGVEGLLTTKWLARGSGQIVDGDKSIVYSHKDLTQQG</sequence>
<keyword id="KW-0028">Amino-acid biosynthesis</keyword>
<keyword id="KW-0067">ATP-binding</keyword>
<keyword id="KW-0418">Kinase</keyword>
<keyword id="KW-0511">Multifunctional enzyme</keyword>
<keyword id="KW-0521">NADP</keyword>
<keyword id="KW-0547">Nucleotide-binding</keyword>
<keyword id="KW-0560">Oxidoreductase</keyword>
<keyword id="KW-0641">Proline biosynthesis</keyword>
<keyword id="KW-1185">Reference proteome</keyword>
<keyword id="KW-0808">Transferase</keyword>
<accession>Q96480</accession>
<organism>
    <name type="scientific">Solanum lycopersicum</name>
    <name type="common">Tomato</name>
    <name type="synonym">Lycopersicon esculentum</name>
    <dbReference type="NCBI Taxonomy" id="4081"/>
    <lineage>
        <taxon>Eukaryota</taxon>
        <taxon>Viridiplantae</taxon>
        <taxon>Streptophyta</taxon>
        <taxon>Embryophyta</taxon>
        <taxon>Tracheophyta</taxon>
        <taxon>Spermatophyta</taxon>
        <taxon>Magnoliopsida</taxon>
        <taxon>eudicotyledons</taxon>
        <taxon>Gunneridae</taxon>
        <taxon>Pentapetalae</taxon>
        <taxon>asterids</taxon>
        <taxon>lamiids</taxon>
        <taxon>Solanales</taxon>
        <taxon>Solanaceae</taxon>
        <taxon>Solanoideae</taxon>
        <taxon>Solaneae</taxon>
        <taxon>Solanum</taxon>
        <taxon>Solanum subgen. Lycopersicon</taxon>
    </lineage>
</organism>
<reference key="1">
    <citation type="online journal article" date="1996" name="Plant Gene Register">
        <title>Cloning of tomPRO1 and tomPRO2 from Lycopersicon esculentum L.: coexistence of policistronic and monocistronic genes which encode the enzymes catalyzing the first two steps of proline biosynthesis.</title>
        <authorList>
            <person name="Maggio A."/>
            <person name="Garcia-Rios M."/>
            <person name="Fujita T."/>
            <person name="Bressan R.A."/>
            <person name="Joly R.J."/>
            <person name="Hasegawa M.P."/>
            <person name="Csonka L.N."/>
        </authorList>
        <locator>PGR96-077</locator>
    </citation>
    <scope>NUCLEOTIDE SEQUENCE [MRNA]</scope>
    <source>
        <strain>cv. Ailsa Craig</strain>
    </source>
</reference>
<feature type="chain" id="PRO_0000109775" description="Delta-1-pyrroline-5-carboxylate synthase">
    <location>
        <begin position="1"/>
        <end position="717"/>
    </location>
</feature>
<feature type="region of interest" description="Glutamate 5-kinase">
    <location>
        <begin position="1"/>
        <end position="296"/>
    </location>
</feature>
<feature type="region of interest" description="Gamma-glutamyl phosphate reductase">
    <location>
        <begin position="297"/>
        <end position="717"/>
    </location>
</feature>
<feature type="binding site" evidence="1">
    <location>
        <position position="60"/>
    </location>
    <ligand>
        <name>substrate</name>
    </ligand>
</feature>
<feature type="binding site" evidence="1">
    <location>
        <position position="157"/>
    </location>
    <ligand>
        <name>substrate</name>
    </ligand>
</feature>
<feature type="binding site" evidence="1">
    <location>
        <position position="176"/>
    </location>
    <ligand>
        <name>substrate</name>
    </ligand>
</feature>
<feature type="binding site" evidence="1">
    <location>
        <begin position="196"/>
        <end position="197"/>
    </location>
    <ligand>
        <name>ATP</name>
        <dbReference type="ChEBI" id="CHEBI:30616"/>
    </ligand>
</feature>
<feature type="binding site" evidence="1">
    <location>
        <begin position="236"/>
        <end position="242"/>
    </location>
    <ligand>
        <name>ATP</name>
        <dbReference type="ChEBI" id="CHEBI:30616"/>
    </ligand>
</feature>
<protein>
    <recommendedName>
        <fullName>Delta-1-pyrroline-5-carboxylate synthase</fullName>
        <shortName>P5CS</shortName>
    </recommendedName>
    <domain>
        <recommendedName>
            <fullName>Glutamate 5-kinase</fullName>
            <shortName>GK</shortName>
            <ecNumber>2.7.2.11</ecNumber>
        </recommendedName>
        <alternativeName>
            <fullName>Gamma-glutamyl kinase</fullName>
        </alternativeName>
    </domain>
    <domain>
        <recommendedName>
            <fullName>Gamma-glutamyl phosphate reductase</fullName>
            <shortName>GPR</shortName>
            <ecNumber>1.2.1.41</ecNumber>
        </recommendedName>
        <alternativeName>
            <fullName>Glutamate-5-semialdehyde dehydrogenase</fullName>
        </alternativeName>
        <alternativeName>
            <fullName>Glutamyl-gamma-semialdehyde dehydrogenase</fullName>
        </alternativeName>
    </domain>
</protein>